<organism>
    <name type="scientific">Methanosphaerula palustris (strain ATCC BAA-1556 / DSM 19958 / E1-9c)</name>
    <dbReference type="NCBI Taxonomy" id="521011"/>
    <lineage>
        <taxon>Archaea</taxon>
        <taxon>Methanobacteriati</taxon>
        <taxon>Methanobacteriota</taxon>
        <taxon>Stenosarchaea group</taxon>
        <taxon>Methanomicrobia</taxon>
        <taxon>Methanomicrobiales</taxon>
        <taxon>Methanoregulaceae</taxon>
        <taxon>Methanosphaerula</taxon>
    </lineage>
</organism>
<feature type="chain" id="PRO_1000201498" description="Elongation factor 2">
    <location>
        <begin position="1"/>
        <end position="730"/>
    </location>
</feature>
<feature type="domain" description="tr-type G">
    <location>
        <begin position="19"/>
        <end position="260"/>
    </location>
</feature>
<feature type="binding site" evidence="1">
    <location>
        <begin position="28"/>
        <end position="35"/>
    </location>
    <ligand>
        <name>GTP</name>
        <dbReference type="ChEBI" id="CHEBI:37565"/>
    </ligand>
</feature>
<feature type="binding site" evidence="1">
    <location>
        <begin position="94"/>
        <end position="98"/>
    </location>
    <ligand>
        <name>GTP</name>
        <dbReference type="ChEBI" id="CHEBI:37565"/>
    </ligand>
</feature>
<feature type="binding site" evidence="1">
    <location>
        <begin position="148"/>
        <end position="151"/>
    </location>
    <ligand>
        <name>GTP</name>
        <dbReference type="ChEBI" id="CHEBI:37565"/>
    </ligand>
</feature>
<feature type="modified residue" description="Diphthamide" evidence="1">
    <location>
        <position position="597"/>
    </location>
</feature>
<reference key="1">
    <citation type="journal article" date="2015" name="Genome Announc.">
        <title>Complete Genome Sequence of Methanosphaerula palustris E1-9CT, a Hydrogenotrophic Methanogen Isolated from a Minerotrophic Fen Peatland.</title>
        <authorList>
            <person name="Cadillo-Quiroz H."/>
            <person name="Browne P."/>
            <person name="Kyrpides N."/>
            <person name="Woyke T."/>
            <person name="Goodwin L."/>
            <person name="Detter C."/>
            <person name="Yavitt J.B."/>
            <person name="Zinder S.H."/>
        </authorList>
    </citation>
    <scope>NUCLEOTIDE SEQUENCE [LARGE SCALE GENOMIC DNA]</scope>
    <source>
        <strain>ATCC BAA-1556 / DSM 19958 / E1-9c</strain>
    </source>
</reference>
<comment type="function">
    <text evidence="1">Catalyzes the GTP-dependent ribosomal translocation step during translation elongation. During this step, the ribosome changes from the pre-translocational (PRE) to the post-translocational (POST) state as the newly formed A-site-bound peptidyl-tRNA and P-site-bound deacylated tRNA move to the P and E sites, respectively. Catalyzes the coordinated movement of the two tRNA molecules, the mRNA and conformational changes in the ribosome.</text>
</comment>
<comment type="subcellular location">
    <subcellularLocation>
        <location evidence="1">Cytoplasm</location>
    </subcellularLocation>
</comment>
<comment type="similarity">
    <text evidence="1">Belongs to the TRAFAC class translation factor GTPase superfamily. Classic translation factor GTPase family. EF-G/EF-2 subfamily.</text>
</comment>
<proteinExistence type="inferred from homology"/>
<keyword id="KW-0963">Cytoplasm</keyword>
<keyword id="KW-0251">Elongation factor</keyword>
<keyword id="KW-0342">GTP-binding</keyword>
<keyword id="KW-0547">Nucleotide-binding</keyword>
<keyword id="KW-0648">Protein biosynthesis</keyword>
<keyword id="KW-1185">Reference proteome</keyword>
<evidence type="ECO:0000255" key="1">
    <source>
        <dbReference type="HAMAP-Rule" id="MF_00054"/>
    </source>
</evidence>
<protein>
    <recommendedName>
        <fullName evidence="1">Elongation factor 2</fullName>
        <shortName evidence="1">EF-2</shortName>
    </recommendedName>
</protein>
<name>EF2_METPE</name>
<gene>
    <name evidence="1" type="primary">fusA</name>
    <name type="ordered locus">Mpal_0279</name>
</gene>
<dbReference type="EMBL" id="CP001338">
    <property type="protein sequence ID" value="ACL15662.1"/>
    <property type="molecule type" value="Genomic_DNA"/>
</dbReference>
<dbReference type="RefSeq" id="WP_012616981.1">
    <property type="nucleotide sequence ID" value="NC_011832.1"/>
</dbReference>
<dbReference type="SMR" id="B8GJK8"/>
<dbReference type="STRING" id="521011.Mpal_0279"/>
<dbReference type="GeneID" id="7270665"/>
<dbReference type="KEGG" id="mpl:Mpal_0279"/>
<dbReference type="eggNOG" id="arCOG01559">
    <property type="taxonomic scope" value="Archaea"/>
</dbReference>
<dbReference type="HOGENOM" id="CLU_002794_11_1_2"/>
<dbReference type="OrthoDB" id="6290at2157"/>
<dbReference type="Proteomes" id="UP000002457">
    <property type="component" value="Chromosome"/>
</dbReference>
<dbReference type="GO" id="GO:0005829">
    <property type="term" value="C:cytosol"/>
    <property type="evidence" value="ECO:0007669"/>
    <property type="project" value="TreeGrafter"/>
</dbReference>
<dbReference type="GO" id="GO:1990904">
    <property type="term" value="C:ribonucleoprotein complex"/>
    <property type="evidence" value="ECO:0007669"/>
    <property type="project" value="TreeGrafter"/>
</dbReference>
<dbReference type="GO" id="GO:0005525">
    <property type="term" value="F:GTP binding"/>
    <property type="evidence" value="ECO:0007669"/>
    <property type="project" value="UniProtKB-UniRule"/>
</dbReference>
<dbReference type="GO" id="GO:0003924">
    <property type="term" value="F:GTPase activity"/>
    <property type="evidence" value="ECO:0007669"/>
    <property type="project" value="InterPro"/>
</dbReference>
<dbReference type="GO" id="GO:0003746">
    <property type="term" value="F:translation elongation factor activity"/>
    <property type="evidence" value="ECO:0007669"/>
    <property type="project" value="UniProtKB-UniRule"/>
</dbReference>
<dbReference type="CDD" id="cd01681">
    <property type="entry name" value="aeEF2_snRNP_like_IV"/>
    <property type="match status" value="1"/>
</dbReference>
<dbReference type="CDD" id="cd16268">
    <property type="entry name" value="EF2_II"/>
    <property type="match status" value="1"/>
</dbReference>
<dbReference type="CDD" id="cd16261">
    <property type="entry name" value="EF2_snRNP_III"/>
    <property type="match status" value="1"/>
</dbReference>
<dbReference type="CDD" id="cd01514">
    <property type="entry name" value="Elongation_Factor_C"/>
    <property type="match status" value="1"/>
</dbReference>
<dbReference type="FunFam" id="3.30.70.240:FF:000010">
    <property type="entry name" value="Elongation factor 2"/>
    <property type="match status" value="1"/>
</dbReference>
<dbReference type="FunFam" id="3.40.50.300:FF:000684">
    <property type="entry name" value="Elongation factor 2"/>
    <property type="match status" value="1"/>
</dbReference>
<dbReference type="FunFam" id="3.30.70.870:FF:000002">
    <property type="entry name" value="Translation elongation factor 2"/>
    <property type="match status" value="1"/>
</dbReference>
<dbReference type="Gene3D" id="3.30.230.10">
    <property type="match status" value="1"/>
</dbReference>
<dbReference type="Gene3D" id="3.30.70.240">
    <property type="match status" value="1"/>
</dbReference>
<dbReference type="Gene3D" id="3.30.70.870">
    <property type="entry name" value="Elongation Factor G (Translational Gtpase), domain 3"/>
    <property type="match status" value="1"/>
</dbReference>
<dbReference type="Gene3D" id="3.40.50.300">
    <property type="entry name" value="P-loop containing nucleotide triphosphate hydrolases"/>
    <property type="match status" value="1"/>
</dbReference>
<dbReference type="Gene3D" id="2.40.30.10">
    <property type="entry name" value="Translation factors"/>
    <property type="match status" value="1"/>
</dbReference>
<dbReference type="HAMAP" id="MF_00054_A">
    <property type="entry name" value="EF_G_EF_2_A"/>
    <property type="match status" value="1"/>
</dbReference>
<dbReference type="InterPro" id="IPR041095">
    <property type="entry name" value="EFG_II"/>
</dbReference>
<dbReference type="InterPro" id="IPR035647">
    <property type="entry name" value="EFG_III/V"/>
</dbReference>
<dbReference type="InterPro" id="IPR000640">
    <property type="entry name" value="EFG_V-like"/>
</dbReference>
<dbReference type="InterPro" id="IPR004161">
    <property type="entry name" value="EFTu-like_2"/>
</dbReference>
<dbReference type="InterPro" id="IPR031157">
    <property type="entry name" value="G_TR_CS"/>
</dbReference>
<dbReference type="InterPro" id="IPR027417">
    <property type="entry name" value="P-loop_NTPase"/>
</dbReference>
<dbReference type="InterPro" id="IPR020568">
    <property type="entry name" value="Ribosomal_Su5_D2-typ_SF"/>
</dbReference>
<dbReference type="InterPro" id="IPR014721">
    <property type="entry name" value="Ribsml_uS5_D2-typ_fold_subgr"/>
</dbReference>
<dbReference type="InterPro" id="IPR005225">
    <property type="entry name" value="Small_GTP-bd"/>
</dbReference>
<dbReference type="InterPro" id="IPR000795">
    <property type="entry name" value="T_Tr_GTP-bd_dom"/>
</dbReference>
<dbReference type="InterPro" id="IPR009000">
    <property type="entry name" value="Transl_B-barrel_sf"/>
</dbReference>
<dbReference type="InterPro" id="IPR004543">
    <property type="entry name" value="Transl_elong_EFG/EF2_arc"/>
</dbReference>
<dbReference type="InterPro" id="IPR005517">
    <property type="entry name" value="Transl_elong_EFG/EF2_IV"/>
</dbReference>
<dbReference type="NCBIfam" id="TIGR00490">
    <property type="entry name" value="aEF-2"/>
    <property type="match status" value="1"/>
</dbReference>
<dbReference type="NCBIfam" id="TIGR00231">
    <property type="entry name" value="small_GTP"/>
    <property type="match status" value="1"/>
</dbReference>
<dbReference type="PANTHER" id="PTHR42908:SF3">
    <property type="entry name" value="ELONGATION FACTOR-LIKE GTPASE 1"/>
    <property type="match status" value="1"/>
</dbReference>
<dbReference type="PANTHER" id="PTHR42908">
    <property type="entry name" value="TRANSLATION ELONGATION FACTOR-RELATED"/>
    <property type="match status" value="1"/>
</dbReference>
<dbReference type="Pfam" id="PF00679">
    <property type="entry name" value="EFG_C"/>
    <property type="match status" value="1"/>
</dbReference>
<dbReference type="Pfam" id="PF14492">
    <property type="entry name" value="EFG_III"/>
    <property type="match status" value="1"/>
</dbReference>
<dbReference type="Pfam" id="PF03764">
    <property type="entry name" value="EFG_IV"/>
    <property type="match status" value="1"/>
</dbReference>
<dbReference type="Pfam" id="PF00009">
    <property type="entry name" value="GTP_EFTU"/>
    <property type="match status" value="1"/>
</dbReference>
<dbReference type="Pfam" id="PF03144">
    <property type="entry name" value="GTP_EFTU_D2"/>
    <property type="match status" value="1"/>
</dbReference>
<dbReference type="PRINTS" id="PR00315">
    <property type="entry name" value="ELONGATNFCT"/>
</dbReference>
<dbReference type="SMART" id="SM00838">
    <property type="entry name" value="EFG_C"/>
    <property type="match status" value="1"/>
</dbReference>
<dbReference type="SMART" id="SM00889">
    <property type="entry name" value="EFG_IV"/>
    <property type="match status" value="1"/>
</dbReference>
<dbReference type="SUPFAM" id="SSF54980">
    <property type="entry name" value="EF-G C-terminal domain-like"/>
    <property type="match status" value="2"/>
</dbReference>
<dbReference type="SUPFAM" id="SSF52540">
    <property type="entry name" value="P-loop containing nucleoside triphosphate hydrolases"/>
    <property type="match status" value="1"/>
</dbReference>
<dbReference type="SUPFAM" id="SSF54211">
    <property type="entry name" value="Ribosomal protein S5 domain 2-like"/>
    <property type="match status" value="1"/>
</dbReference>
<dbReference type="SUPFAM" id="SSF50447">
    <property type="entry name" value="Translation proteins"/>
    <property type="match status" value="1"/>
</dbReference>
<dbReference type="PROSITE" id="PS00301">
    <property type="entry name" value="G_TR_1"/>
    <property type="match status" value="1"/>
</dbReference>
<dbReference type="PROSITE" id="PS51722">
    <property type="entry name" value="G_TR_2"/>
    <property type="match status" value="1"/>
</dbReference>
<sequence length="730" mass="80460">MARGKKMVDRVSELMSQPKFIRNIGIVAHIDHGKTTLSDNLLSGAGMISEELAGRQLFMDSDAEEQARGITIDASNVSMVHEYEGQEYLINMIDTPGHVDFGGDVTRAMRAVDGAVVVVDAVEGTMPQTETVLRQALKEQVVPVLFINKVDRLINELKVDEMEMQVRLAKVIDKVNKLIKGMNEDMYNNGWKLDAAKGTVAFGSALYNWAVSAPFMQKSGVSFKDVYNKCREGDMKSLAKSSPLHAVLLDMVVKHLPDPFDAQKRRINVIWHGDKESVEGKSMLTADPNGPIAMMVTDISFDPHAGEVATGRLFSGTLRRGTELYIIGSAMKANRVQQVGIFMGPTRVEVEELPAGNIAAVTGLKDAIVGSTVTNLREMVPFEALTHYSEPVMTVAVEAKNMKDLPKLVEVLRQVAKEDPTLVITINEETGEHLISGMGELHLEIITGRIKRDKGVEIVTSEPIVVYRETATRKAGPIEGKSPNRHNRFYVELEPLDQVIVDLIRNGEVSMNQTWIERRDILVANGWEKDEAKNIKDISTTNIFIDMTKGVQYLNETMELILEGLHEALQGGPLADEPVQNMKIRLVDVKLHEDAIHRGPAQVIPAVRSAVKAGILYAGDSLLEPIQKISITVPTDQMGNATSQIQGRRGSVLDITSEGDTITVVGRVPVAELFGFSGDIRSATEGRAMWNTEFAGFEIVPNSLVKDVVIAIRKRKGLKEQMPRPEDYLA</sequence>
<accession>B8GJK8</accession>